<comment type="function">
    <text evidence="4 5 6 8">Odorant receptor for musk, which specifically recognizes muscone, musk xylol, and musk ketone (PubMed:24361078, PubMed:25901328, PubMed:27098692). Ligand-binding causes a conformation change that triggers signaling via G(s)-class of G alpha protein GNAL, activating adenylyl cyclase (Probable).</text>
</comment>
<comment type="subcellular location">
    <subcellularLocation>
        <location evidence="9 10">Cell membrane</location>
        <topology evidence="1">Multi-pass membrane protein</topology>
    </subcellularLocation>
</comment>
<comment type="similarity">
    <text evidence="2">Belongs to the G-protein coupled receptor 1 family.</text>
</comment>
<comment type="online information" name="Human Olfactory Receptor Data Exploratorium (HORDE)">
    <link uri="http://genome.weizmann.ac.il/horde/card/index/symbol:OR5AN1"/>
</comment>
<organism>
    <name type="scientific">Homo sapiens</name>
    <name type="common">Human</name>
    <dbReference type="NCBI Taxonomy" id="9606"/>
    <lineage>
        <taxon>Eukaryota</taxon>
        <taxon>Metazoa</taxon>
        <taxon>Chordata</taxon>
        <taxon>Craniata</taxon>
        <taxon>Vertebrata</taxon>
        <taxon>Euteleostomi</taxon>
        <taxon>Mammalia</taxon>
        <taxon>Eutheria</taxon>
        <taxon>Euarchontoglires</taxon>
        <taxon>Primates</taxon>
        <taxon>Haplorrhini</taxon>
        <taxon>Catarrhini</taxon>
        <taxon>Hominidae</taxon>
        <taxon>Homo</taxon>
    </lineage>
</organism>
<feature type="chain" id="PRO_0000150577" description="Olfactory receptor 5AN1">
    <location>
        <begin position="1"/>
        <end position="311"/>
    </location>
</feature>
<feature type="topological domain" description="Extracellular" evidence="1">
    <location>
        <begin position="1"/>
        <end position="26"/>
    </location>
</feature>
<feature type="transmembrane region" description="Helical; Name=1" evidence="1">
    <location>
        <begin position="27"/>
        <end position="47"/>
    </location>
</feature>
<feature type="topological domain" description="Cytoplasmic" evidence="1">
    <location>
        <begin position="48"/>
        <end position="55"/>
    </location>
</feature>
<feature type="transmembrane region" description="Helical; Name=2" evidence="1">
    <location>
        <begin position="56"/>
        <end position="76"/>
    </location>
</feature>
<feature type="topological domain" description="Extracellular" evidence="1">
    <location>
        <begin position="77"/>
        <end position="100"/>
    </location>
</feature>
<feature type="transmembrane region" description="Helical; Name=3" evidence="1">
    <location>
        <begin position="101"/>
        <end position="121"/>
    </location>
</feature>
<feature type="topological domain" description="Cytoplasmic" evidence="1">
    <location>
        <begin position="122"/>
        <end position="134"/>
    </location>
</feature>
<feature type="transmembrane region" description="Helical; Name=4" evidence="1">
    <location>
        <begin position="135"/>
        <end position="155"/>
    </location>
</feature>
<feature type="topological domain" description="Extracellular" evidence="1">
    <location>
        <begin position="156"/>
        <end position="197"/>
    </location>
</feature>
<feature type="transmembrane region" description="Helical; Name=5" evidence="1">
    <location>
        <begin position="198"/>
        <end position="218"/>
    </location>
</feature>
<feature type="topological domain" description="Cytoplasmic" evidence="1">
    <location>
        <begin position="219"/>
        <end position="238"/>
    </location>
</feature>
<feature type="transmembrane region" description="Helical; Name=6" evidence="1">
    <location>
        <begin position="239"/>
        <end position="259"/>
    </location>
</feature>
<feature type="topological domain" description="Extracellular" evidence="1">
    <location>
        <begin position="260"/>
        <end position="272"/>
    </location>
</feature>
<feature type="transmembrane region" description="Helical; Name=7" evidence="1">
    <location>
        <begin position="273"/>
        <end position="293"/>
    </location>
</feature>
<feature type="topological domain" description="Cytoplasmic" evidence="1">
    <location>
        <begin position="294"/>
        <end position="311"/>
    </location>
</feature>
<feature type="glycosylation site" description="N-linked (GlcNAc...) asparagine" evidence="1">
    <location>
        <position position="6"/>
    </location>
</feature>
<feature type="disulfide bond" evidence="2">
    <location>
        <begin position="98"/>
        <end position="190"/>
    </location>
</feature>
<feature type="sequence variant" id="VAR_024098" description="In dbSNP:rs7941190." evidence="3">
    <original>L</original>
    <variation>F</variation>
    <location>
        <position position="289"/>
    </location>
</feature>
<name>O5AN1_HUMAN</name>
<proteinExistence type="evidence at transcript level"/>
<dbReference type="EMBL" id="AB065806">
    <property type="protein sequence ID" value="BAC06025.1"/>
    <property type="molecule type" value="Genomic_DNA"/>
</dbReference>
<dbReference type="EMBL" id="BC140917">
    <property type="protein sequence ID" value="AAI40918.1"/>
    <property type="molecule type" value="mRNA"/>
</dbReference>
<dbReference type="EMBL" id="BK004508">
    <property type="protein sequence ID" value="DAA04906.1"/>
    <property type="molecule type" value="Genomic_DNA"/>
</dbReference>
<dbReference type="CCDS" id="CCDS31559.1"/>
<dbReference type="RefSeq" id="NP_001004729.1">
    <property type="nucleotide sequence ID" value="NM_001004729.2"/>
</dbReference>
<dbReference type="SMR" id="Q8NGI8"/>
<dbReference type="FunCoup" id="Q8NGI8">
    <property type="interactions" value="420"/>
</dbReference>
<dbReference type="STRING" id="9606.ENSP00000492957"/>
<dbReference type="GlyCosmos" id="Q8NGI8">
    <property type="glycosylation" value="1 site, No reported glycans"/>
</dbReference>
<dbReference type="GlyGen" id="Q8NGI8">
    <property type="glycosylation" value="1 site"/>
</dbReference>
<dbReference type="BioMuta" id="OR5AN1"/>
<dbReference type="DMDM" id="38372701"/>
<dbReference type="MassIVE" id="Q8NGI8"/>
<dbReference type="PaxDb" id="9606-ENSP00000320302"/>
<dbReference type="Antibodypedia" id="58819">
    <property type="antibodies" value="78 antibodies from 19 providers"/>
</dbReference>
<dbReference type="DNASU" id="390195"/>
<dbReference type="Ensembl" id="ENST00000313940.2">
    <property type="protein sequence ID" value="ENSP00000320302.2"/>
    <property type="gene ID" value="ENSG00000176495.3"/>
</dbReference>
<dbReference type="Ensembl" id="ENST00000641850.1">
    <property type="protein sequence ID" value="ENSP00000492957.1"/>
    <property type="gene ID" value="ENSG00000176495.3"/>
</dbReference>
<dbReference type="Ensembl" id="ENST00000641998.1">
    <property type="protein sequence ID" value="ENSP00000493250.1"/>
    <property type="gene ID" value="ENSG00000176495.3"/>
</dbReference>
<dbReference type="GeneID" id="390195"/>
<dbReference type="KEGG" id="hsa:390195"/>
<dbReference type="MANE-Select" id="ENST00000641998.1">
    <property type="protein sequence ID" value="ENSP00000493250.1"/>
    <property type="RefSeq nucleotide sequence ID" value="NM_001004729.2"/>
    <property type="RefSeq protein sequence ID" value="NP_001004729.1"/>
</dbReference>
<dbReference type="UCSC" id="uc010rks.3">
    <property type="organism name" value="human"/>
</dbReference>
<dbReference type="AGR" id="HGNC:15255"/>
<dbReference type="CTD" id="390195"/>
<dbReference type="GeneCards" id="OR5AN1"/>
<dbReference type="HGNC" id="HGNC:15255">
    <property type="gene designation" value="OR5AN1"/>
</dbReference>
<dbReference type="HPA" id="ENSG00000176495">
    <property type="expression patterns" value="Not detected"/>
</dbReference>
<dbReference type="MIM" id="615702">
    <property type="type" value="gene"/>
</dbReference>
<dbReference type="neXtProt" id="NX_Q8NGI8"/>
<dbReference type="OpenTargets" id="ENSG00000176495"/>
<dbReference type="PharmGKB" id="PA32466"/>
<dbReference type="VEuPathDB" id="HostDB:ENSG00000176495"/>
<dbReference type="eggNOG" id="ENOG502TM2A">
    <property type="taxonomic scope" value="Eukaryota"/>
</dbReference>
<dbReference type="GeneTree" id="ENSGT01130000278279"/>
<dbReference type="HOGENOM" id="CLU_012526_1_0_1"/>
<dbReference type="InParanoid" id="Q8NGI8"/>
<dbReference type="OMA" id="YITSLTW"/>
<dbReference type="OrthoDB" id="6144223at2759"/>
<dbReference type="PAN-GO" id="Q8NGI8">
    <property type="GO annotations" value="2 GO annotations based on evolutionary models"/>
</dbReference>
<dbReference type="PhylomeDB" id="Q8NGI8"/>
<dbReference type="TreeFam" id="TF352755"/>
<dbReference type="PathwayCommons" id="Q8NGI8"/>
<dbReference type="Reactome" id="R-HSA-9752946">
    <property type="pathway name" value="Expression and translocation of olfactory receptors"/>
</dbReference>
<dbReference type="BioGRID-ORCS" id="390195">
    <property type="hits" value="15 hits in 747 CRISPR screens"/>
</dbReference>
<dbReference type="GeneWiki" id="OR5AN1"/>
<dbReference type="GenomeRNAi" id="390195"/>
<dbReference type="Pharos" id="Q8NGI8">
    <property type="development level" value="Tbio"/>
</dbReference>
<dbReference type="PRO" id="PR:Q8NGI8"/>
<dbReference type="Proteomes" id="UP000005640">
    <property type="component" value="Chromosome 11"/>
</dbReference>
<dbReference type="RNAct" id="Q8NGI8">
    <property type="molecule type" value="protein"/>
</dbReference>
<dbReference type="Bgee" id="ENSG00000176495">
    <property type="expression patterns" value="Expressed in male germ line stem cell (sensu Vertebrata) in testis and 1 other cell type or tissue"/>
</dbReference>
<dbReference type="ExpressionAtlas" id="Q8NGI8">
    <property type="expression patterns" value="baseline and differential"/>
</dbReference>
<dbReference type="GO" id="GO:0016020">
    <property type="term" value="C:membrane"/>
    <property type="evidence" value="ECO:0000314"/>
    <property type="project" value="UniProtKB"/>
</dbReference>
<dbReference type="GO" id="GO:0005886">
    <property type="term" value="C:plasma membrane"/>
    <property type="evidence" value="ECO:0000314"/>
    <property type="project" value="UniProt"/>
</dbReference>
<dbReference type="GO" id="GO:0005549">
    <property type="term" value="F:odorant binding"/>
    <property type="evidence" value="ECO:0000314"/>
    <property type="project" value="UniProtKB"/>
</dbReference>
<dbReference type="GO" id="GO:0004984">
    <property type="term" value="F:olfactory receptor activity"/>
    <property type="evidence" value="ECO:0000314"/>
    <property type="project" value="UniProtKB"/>
</dbReference>
<dbReference type="GO" id="GO:0001594">
    <property type="term" value="F:trace-amine receptor activity"/>
    <property type="evidence" value="ECO:0000314"/>
    <property type="project" value="UniProt"/>
</dbReference>
<dbReference type="GO" id="GO:0007189">
    <property type="term" value="P:adenylate cyclase-activating G protein-coupled receptor signaling pathway"/>
    <property type="evidence" value="ECO:0000250"/>
    <property type="project" value="UniProt"/>
</dbReference>
<dbReference type="GO" id="GO:0050907">
    <property type="term" value="P:detection of chemical stimulus involved in sensory perception"/>
    <property type="evidence" value="ECO:0000314"/>
    <property type="project" value="UniProtKB"/>
</dbReference>
<dbReference type="GO" id="GO:0007608">
    <property type="term" value="P:sensory perception of smell"/>
    <property type="evidence" value="ECO:0000314"/>
    <property type="project" value="UniProtKB"/>
</dbReference>
<dbReference type="CDD" id="cd15417">
    <property type="entry name" value="7tmA_OR5A1-like"/>
    <property type="match status" value="1"/>
</dbReference>
<dbReference type="FunFam" id="1.20.1070.10:FF:000003">
    <property type="entry name" value="Olfactory receptor"/>
    <property type="match status" value="1"/>
</dbReference>
<dbReference type="Gene3D" id="1.20.1070.10">
    <property type="entry name" value="Rhodopsin 7-helix transmembrane proteins"/>
    <property type="match status" value="1"/>
</dbReference>
<dbReference type="InterPro" id="IPR000276">
    <property type="entry name" value="GPCR_Rhodpsn"/>
</dbReference>
<dbReference type="InterPro" id="IPR017452">
    <property type="entry name" value="GPCR_Rhodpsn_7TM"/>
</dbReference>
<dbReference type="InterPro" id="IPR000725">
    <property type="entry name" value="Olfact_rcpt"/>
</dbReference>
<dbReference type="InterPro" id="IPR050516">
    <property type="entry name" value="Olfactory_GPCR"/>
</dbReference>
<dbReference type="PANTHER" id="PTHR26452">
    <property type="entry name" value="OLFACTORY RECEPTOR"/>
    <property type="match status" value="1"/>
</dbReference>
<dbReference type="Pfam" id="PF13853">
    <property type="entry name" value="7tm_4"/>
    <property type="match status" value="1"/>
</dbReference>
<dbReference type="PRINTS" id="PR00237">
    <property type="entry name" value="GPCRRHODOPSN"/>
</dbReference>
<dbReference type="PRINTS" id="PR00245">
    <property type="entry name" value="OLFACTORYR"/>
</dbReference>
<dbReference type="SUPFAM" id="SSF81321">
    <property type="entry name" value="Family A G protein-coupled receptor-like"/>
    <property type="match status" value="1"/>
</dbReference>
<dbReference type="PROSITE" id="PS00237">
    <property type="entry name" value="G_PROTEIN_RECEP_F1_1"/>
    <property type="match status" value="1"/>
</dbReference>
<dbReference type="PROSITE" id="PS50262">
    <property type="entry name" value="G_PROTEIN_RECEP_F1_2"/>
    <property type="match status" value="1"/>
</dbReference>
<gene>
    <name evidence="7 11" type="primary">OR5AN1</name>
</gene>
<sequence length="311" mass="34789">MTGGGNITEITYFILLGFSDFPRIIKVLFTIFLVIYITSLAWNLSLIVLIRMDSHLHTPMYFFLSNLSFIDVCYISSTVPKMLSNLLQEQQTITFVGCIIQYFIFSTMGLSESCLMTAMAYDRYAAICNPLLYSSIMSPTLCVWMVLGAYMTGLTASLFQIGALLQLHFCGSNVIRHFFCDMPQLLILSCTDTFFVQVMTAILTMFFGIASALVIMISYGYIGISIMKITSAKGRSKAFNTCASHLTAVSLFYTSGIFVYLSSSSGGSSSFDRFASVFYTVVIPMLNPLIYSLRNKEIKDALKRLQKRKCC</sequence>
<keyword id="KW-1003">Cell membrane</keyword>
<keyword id="KW-1015">Disulfide bond</keyword>
<keyword id="KW-0297">G-protein coupled receptor</keyword>
<keyword id="KW-0325">Glycoprotein</keyword>
<keyword id="KW-0472">Membrane</keyword>
<keyword id="KW-0552">Olfaction</keyword>
<keyword id="KW-0675">Receptor</keyword>
<keyword id="KW-1185">Reference proteome</keyword>
<keyword id="KW-0716">Sensory transduction</keyword>
<keyword id="KW-0807">Transducer</keyword>
<keyword id="KW-0812">Transmembrane</keyword>
<keyword id="KW-1133">Transmembrane helix</keyword>
<accession>Q8NGI8</accession>
<accession>B9EIS2</accession>
<accession>Q6IEV4</accession>
<protein>
    <recommendedName>
        <fullName evidence="8">Olfactory receptor 5AN1</fullName>
    </recommendedName>
    <alternativeName>
        <fullName>Olfactory receptor OR11-244</fullName>
    </alternativeName>
</protein>
<evidence type="ECO:0000255" key="1"/>
<evidence type="ECO:0000255" key="2">
    <source>
        <dbReference type="PROSITE-ProRule" id="PRU00521"/>
    </source>
</evidence>
<evidence type="ECO:0000269" key="3">
    <source>
    </source>
</evidence>
<evidence type="ECO:0000269" key="4">
    <source>
    </source>
</evidence>
<evidence type="ECO:0000269" key="5">
    <source>
    </source>
</evidence>
<evidence type="ECO:0000269" key="6">
    <source>
    </source>
</evidence>
<evidence type="ECO:0000303" key="7">
    <source>
    </source>
</evidence>
<evidence type="ECO:0000305" key="8"/>
<evidence type="ECO:0000305" key="9">
    <source>
    </source>
</evidence>
<evidence type="ECO:0000305" key="10">
    <source>
    </source>
</evidence>
<evidence type="ECO:0000312" key="11">
    <source>
        <dbReference type="HGNC" id="HGNC:15255"/>
    </source>
</evidence>
<reference key="1">
    <citation type="submission" date="2001-07" db="EMBL/GenBank/DDBJ databases">
        <title>Genome-wide discovery and analysis of human seven transmembrane helix receptor genes.</title>
        <authorList>
            <person name="Suwa M."/>
            <person name="Sato T."/>
            <person name="Okouchi I."/>
            <person name="Arita M."/>
            <person name="Futami K."/>
            <person name="Matsumoto S."/>
            <person name="Tsutsumi S."/>
            <person name="Aburatani H."/>
            <person name="Asai K."/>
            <person name="Akiyama Y."/>
        </authorList>
    </citation>
    <scope>NUCLEOTIDE SEQUENCE [GENOMIC DNA]</scope>
</reference>
<reference key="2">
    <citation type="journal article" date="2004" name="Genome Res.">
        <title>The status, quality, and expansion of the NIH full-length cDNA project: the Mammalian Gene Collection (MGC).</title>
        <authorList>
            <consortium name="The MGC Project Team"/>
        </authorList>
    </citation>
    <scope>NUCLEOTIDE SEQUENCE [LARGE SCALE MRNA]</scope>
    <scope>VARIANT PHE-289</scope>
</reference>
<reference key="3">
    <citation type="journal article" date="2004" name="Proc. Natl. Acad. Sci. U.S.A.">
        <title>The human olfactory receptor gene family.</title>
        <authorList>
            <person name="Malnic B."/>
            <person name="Godfrey P.A."/>
            <person name="Buck L.B."/>
        </authorList>
    </citation>
    <scope>IDENTIFICATION</scope>
</reference>
<reference key="4">
    <citation type="journal article" date="2004" name="Proc. Natl. Acad. Sci. U.S.A.">
        <authorList>
            <person name="Malnic B."/>
            <person name="Godfrey P.A."/>
            <person name="Buck L.B."/>
        </authorList>
    </citation>
    <scope>ERRATUM OF PUBMED:14983052</scope>
</reference>
<reference key="5">
    <citation type="journal article" date="2014" name="Neuron">
        <title>Olfactory receptor and neural pathway responsible for highly selective sensing of musk odors.</title>
        <authorList>
            <person name="Shirasu M."/>
            <person name="Yoshikawa K."/>
            <person name="Takai Y."/>
            <person name="Nakashima A."/>
            <person name="Takeuchi H."/>
            <person name="Sakano H."/>
            <person name="Touhara K."/>
        </authorList>
    </citation>
    <scope>FUNCTION</scope>
    <scope>SUBCELLULAR LOCATION</scope>
</reference>
<reference key="6">
    <citation type="journal article" date="2015" name="Proc. Natl. Acad. Sci. U.S.A.">
        <title>Implausibility of the vibrational theory of olfaction.</title>
        <authorList>
            <person name="Block E."/>
            <person name="Jang S."/>
            <person name="Matsunami H."/>
            <person name="Sekharan S."/>
            <person name="Dethier B."/>
            <person name="Ertem M.Z."/>
            <person name="Gundala S."/>
            <person name="Pan Y."/>
            <person name="Li S."/>
            <person name="Li Z."/>
            <person name="Lodge S.N."/>
            <person name="Ozbil M."/>
            <person name="Jiang H."/>
            <person name="Penalba S.F."/>
            <person name="Batista V.S."/>
            <person name="Zhuang H."/>
        </authorList>
    </citation>
    <scope>FUNCTION</scope>
    <scope>SUBCELLULAR LOCATION</scope>
</reference>
<reference key="7">
    <citation type="journal article" date="2016" name="J. Neurosci.">
        <title>Ligand specificity and evolution of mammalian musk odor receptors: effect of single receptor deletion on odor detection.</title>
        <authorList>
            <person name="Sato-Akuhara N."/>
            <person name="Horio N."/>
            <person name="Kato-Namba A."/>
            <person name="Yoshikawa K."/>
            <person name="Niimura Y."/>
            <person name="Ihara S."/>
            <person name="Shirasu M."/>
            <person name="Touhara K."/>
        </authorList>
    </citation>
    <scope>FUNCTION</scope>
</reference>